<evidence type="ECO:0000255" key="1">
    <source>
        <dbReference type="HAMAP-Rule" id="MF_00239"/>
    </source>
</evidence>
<comment type="catalytic activity">
    <reaction evidence="1">
        <text>CMP + ATP = CDP + ADP</text>
        <dbReference type="Rhea" id="RHEA:11600"/>
        <dbReference type="ChEBI" id="CHEBI:30616"/>
        <dbReference type="ChEBI" id="CHEBI:58069"/>
        <dbReference type="ChEBI" id="CHEBI:60377"/>
        <dbReference type="ChEBI" id="CHEBI:456216"/>
        <dbReference type="EC" id="2.7.4.25"/>
    </reaction>
</comment>
<comment type="catalytic activity">
    <reaction evidence="1">
        <text>dCMP + ATP = dCDP + ADP</text>
        <dbReference type="Rhea" id="RHEA:25094"/>
        <dbReference type="ChEBI" id="CHEBI:30616"/>
        <dbReference type="ChEBI" id="CHEBI:57566"/>
        <dbReference type="ChEBI" id="CHEBI:58593"/>
        <dbReference type="ChEBI" id="CHEBI:456216"/>
        <dbReference type="EC" id="2.7.4.25"/>
    </reaction>
</comment>
<comment type="subcellular location">
    <subcellularLocation>
        <location evidence="1">Cytoplasm</location>
    </subcellularLocation>
</comment>
<comment type="similarity">
    <text evidence="1">Belongs to the cytidylate kinase family. Type 2 subfamily.</text>
</comment>
<keyword id="KW-0067">ATP-binding</keyword>
<keyword id="KW-0963">Cytoplasm</keyword>
<keyword id="KW-0418">Kinase</keyword>
<keyword id="KW-0547">Nucleotide-binding</keyword>
<keyword id="KW-1185">Reference proteome</keyword>
<keyword id="KW-0808">Transferase</keyword>
<sequence>MRITISGSPGSGTTTLGRSIAEKYSYRYVSAGEVFRGLAKERNMDLAAFGKIAETDPAIDLEIDARQKEIGESSDDIILEGRLAGWMVENADLKILLCASPECRSTRIAAREGLTEKQAFEMTIEREACEAGRYMEYYEIDILDFSPYDLILNSETFSANELFAIVDAAVSSLLKRE</sequence>
<dbReference type="EC" id="2.7.4.25" evidence="1"/>
<dbReference type="EMBL" id="CP000559">
    <property type="protein sequence ID" value="ABN06284.1"/>
    <property type="molecule type" value="Genomic_DNA"/>
</dbReference>
<dbReference type="RefSeq" id="WP_011832485.1">
    <property type="nucleotide sequence ID" value="NC_008942.1"/>
</dbReference>
<dbReference type="SMR" id="A2SPM8"/>
<dbReference type="STRING" id="410358.Mlab_0107"/>
<dbReference type="GeneID" id="4794586"/>
<dbReference type="KEGG" id="mla:Mlab_0107"/>
<dbReference type="eggNOG" id="arCOG01037">
    <property type="taxonomic scope" value="Archaea"/>
</dbReference>
<dbReference type="HOGENOM" id="CLU_079959_1_0_2"/>
<dbReference type="OrthoDB" id="31096at2157"/>
<dbReference type="Proteomes" id="UP000000365">
    <property type="component" value="Chromosome"/>
</dbReference>
<dbReference type="GO" id="GO:0005737">
    <property type="term" value="C:cytoplasm"/>
    <property type="evidence" value="ECO:0007669"/>
    <property type="project" value="UniProtKB-SubCell"/>
</dbReference>
<dbReference type="GO" id="GO:0005524">
    <property type="term" value="F:ATP binding"/>
    <property type="evidence" value="ECO:0007669"/>
    <property type="project" value="UniProtKB-UniRule"/>
</dbReference>
<dbReference type="GO" id="GO:0036430">
    <property type="term" value="F:CMP kinase activity"/>
    <property type="evidence" value="ECO:0007669"/>
    <property type="project" value="RHEA"/>
</dbReference>
<dbReference type="GO" id="GO:0036431">
    <property type="term" value="F:dCMP kinase activity"/>
    <property type="evidence" value="ECO:0007669"/>
    <property type="project" value="RHEA"/>
</dbReference>
<dbReference type="GO" id="GO:0006220">
    <property type="term" value="P:pyrimidine nucleotide metabolic process"/>
    <property type="evidence" value="ECO:0007669"/>
    <property type="project" value="UniProtKB-UniRule"/>
</dbReference>
<dbReference type="CDD" id="cd02020">
    <property type="entry name" value="CMPK"/>
    <property type="match status" value="1"/>
</dbReference>
<dbReference type="Gene3D" id="3.40.50.300">
    <property type="entry name" value="P-loop containing nucleotide triphosphate hydrolases"/>
    <property type="match status" value="1"/>
</dbReference>
<dbReference type="HAMAP" id="MF_00239">
    <property type="entry name" value="Cytidyl_kinase_type2"/>
    <property type="match status" value="1"/>
</dbReference>
<dbReference type="InterPro" id="IPR011892">
    <property type="entry name" value="Cyt_kin_arch"/>
</dbReference>
<dbReference type="InterPro" id="IPR011994">
    <property type="entry name" value="Cytidylate_kinase_dom"/>
</dbReference>
<dbReference type="InterPro" id="IPR027417">
    <property type="entry name" value="P-loop_NTPase"/>
</dbReference>
<dbReference type="NCBIfam" id="TIGR02173">
    <property type="entry name" value="cyt_kin_arch"/>
    <property type="match status" value="1"/>
</dbReference>
<dbReference type="Pfam" id="PF13189">
    <property type="entry name" value="Cytidylate_kin2"/>
    <property type="match status" value="1"/>
</dbReference>
<dbReference type="SUPFAM" id="SSF52540">
    <property type="entry name" value="P-loop containing nucleoside triphosphate hydrolases"/>
    <property type="match status" value="1"/>
</dbReference>
<feature type="chain" id="PRO_1000005674" description="Cytidylate kinase">
    <location>
        <begin position="1"/>
        <end position="177"/>
    </location>
</feature>
<feature type="binding site" evidence="1">
    <location>
        <begin position="7"/>
        <end position="15"/>
    </location>
    <ligand>
        <name>ATP</name>
        <dbReference type="ChEBI" id="CHEBI:30616"/>
    </ligand>
</feature>
<protein>
    <recommendedName>
        <fullName evidence="1">Cytidylate kinase</fullName>
        <shortName evidence="1">CK</shortName>
        <ecNumber evidence="1">2.7.4.25</ecNumber>
    </recommendedName>
    <alternativeName>
        <fullName evidence="1">Cytidine monophosphate kinase</fullName>
        <shortName evidence="1">CMP kinase</shortName>
    </alternativeName>
</protein>
<reference key="1">
    <citation type="journal article" date="2009" name="Stand. Genomic Sci.">
        <title>Complete genome sequence of Methanocorpusculum labreanum type strain Z.</title>
        <authorList>
            <person name="Anderson I.J."/>
            <person name="Sieprawska-Lupa M."/>
            <person name="Goltsman E."/>
            <person name="Lapidus A."/>
            <person name="Copeland A."/>
            <person name="Glavina Del Rio T."/>
            <person name="Tice H."/>
            <person name="Dalin E."/>
            <person name="Barry K."/>
            <person name="Pitluck S."/>
            <person name="Hauser L."/>
            <person name="Land M."/>
            <person name="Lucas S."/>
            <person name="Richardson P."/>
            <person name="Whitman W.B."/>
            <person name="Kyrpides N.C."/>
        </authorList>
    </citation>
    <scope>NUCLEOTIDE SEQUENCE [LARGE SCALE GENOMIC DNA]</scope>
    <source>
        <strain>ATCC 43576 / DSM 4855 / Z</strain>
    </source>
</reference>
<name>KCY_METLZ</name>
<organism>
    <name type="scientific">Methanocorpusculum labreanum (strain ATCC 43576 / DSM 4855 / Z)</name>
    <dbReference type="NCBI Taxonomy" id="410358"/>
    <lineage>
        <taxon>Archaea</taxon>
        <taxon>Methanobacteriati</taxon>
        <taxon>Methanobacteriota</taxon>
        <taxon>Stenosarchaea group</taxon>
        <taxon>Methanomicrobia</taxon>
        <taxon>Methanomicrobiales</taxon>
        <taxon>Methanocorpusculaceae</taxon>
        <taxon>Methanocorpusculum</taxon>
    </lineage>
</organism>
<accession>A2SPM8</accession>
<gene>
    <name evidence="1" type="primary">cmk</name>
    <name type="ordered locus">Mlab_0107</name>
</gene>
<proteinExistence type="inferred from homology"/>